<organism>
    <name type="scientific">Methanocaldococcus jannaschii (strain ATCC 43067 / DSM 2661 / JAL-1 / JCM 10045 / NBRC 100440)</name>
    <name type="common">Methanococcus jannaschii</name>
    <dbReference type="NCBI Taxonomy" id="243232"/>
    <lineage>
        <taxon>Archaea</taxon>
        <taxon>Methanobacteriati</taxon>
        <taxon>Methanobacteriota</taxon>
        <taxon>Methanomada group</taxon>
        <taxon>Methanococci</taxon>
        <taxon>Methanococcales</taxon>
        <taxon>Methanocaldococcaceae</taxon>
        <taxon>Methanocaldococcus</taxon>
    </lineage>
</organism>
<keyword id="KW-1185">Reference proteome</keyword>
<reference key="1">
    <citation type="journal article" date="1996" name="Science">
        <title>Complete genome sequence of the methanogenic archaeon, Methanococcus jannaschii.</title>
        <authorList>
            <person name="Bult C.J."/>
            <person name="White O."/>
            <person name="Olsen G.J."/>
            <person name="Zhou L."/>
            <person name="Fleischmann R.D."/>
            <person name="Sutton G.G."/>
            <person name="Blake J.A."/>
            <person name="FitzGerald L.M."/>
            <person name="Clayton R.A."/>
            <person name="Gocayne J.D."/>
            <person name="Kerlavage A.R."/>
            <person name="Dougherty B.A."/>
            <person name="Tomb J.-F."/>
            <person name="Adams M.D."/>
            <person name="Reich C.I."/>
            <person name="Overbeek R."/>
            <person name="Kirkness E.F."/>
            <person name="Weinstock K.G."/>
            <person name="Merrick J.M."/>
            <person name="Glodek A."/>
            <person name="Scott J.L."/>
            <person name="Geoghagen N.S.M."/>
            <person name="Weidman J.F."/>
            <person name="Fuhrmann J.L."/>
            <person name="Nguyen D."/>
            <person name="Utterback T.R."/>
            <person name="Kelley J.M."/>
            <person name="Peterson J.D."/>
            <person name="Sadow P.W."/>
            <person name="Hanna M.C."/>
            <person name="Cotton M.D."/>
            <person name="Roberts K.M."/>
            <person name="Hurst M.A."/>
            <person name="Kaine B.P."/>
            <person name="Borodovsky M."/>
            <person name="Klenk H.-P."/>
            <person name="Fraser C.M."/>
            <person name="Smith H.O."/>
            <person name="Woese C.R."/>
            <person name="Venter J.C."/>
        </authorList>
    </citation>
    <scope>NUCLEOTIDE SEQUENCE [LARGE SCALE GENOMIC DNA]</scope>
    <source>
        <strain>ATCC 43067 / DSM 2661 / JAL-1 / JCM 10045 / NBRC 100440</strain>
    </source>
</reference>
<gene>
    <name type="ordered locus">MJ0455</name>
</gene>
<proteinExistence type="predicted"/>
<accession>Q57897</accession>
<sequence length="193" mass="22113">MKCSQCNKKLCYTGKDCKKDITQKIIEEYKKEENLKIAEVSAYIEATYYMKKTRLEEIIEFCKLMEYKKIGIAFCIGLENEAKILAKILSKHFEVYSVCCKVCGIDKDVFKFKKINKGEKEAMCNPIGQAEILNEIGTDLNIIVGLCIGHDILFQKYSKAPTTTFIVKDRVLSHNTAGAIYTKYYLKKLLEGK</sequence>
<feature type="chain" id="PRO_0000106884" description="Uncharacterized protein MJ0455">
    <location>
        <begin position="1"/>
        <end position="193"/>
    </location>
</feature>
<protein>
    <recommendedName>
        <fullName>Uncharacterized protein MJ0455</fullName>
    </recommendedName>
</protein>
<dbReference type="EMBL" id="L77117">
    <property type="protein sequence ID" value="AAB98448.1"/>
    <property type="molecule type" value="Genomic_DNA"/>
</dbReference>
<dbReference type="PIR" id="G64356">
    <property type="entry name" value="G64356"/>
</dbReference>
<dbReference type="RefSeq" id="WP_010869954.1">
    <property type="nucleotide sequence ID" value="NC_000909.1"/>
</dbReference>
<dbReference type="STRING" id="243232.MJ_0455"/>
<dbReference type="PaxDb" id="243232-MJ_0455"/>
<dbReference type="EnsemblBacteria" id="AAB98448">
    <property type="protein sequence ID" value="AAB98448"/>
    <property type="gene ID" value="MJ_0455"/>
</dbReference>
<dbReference type="GeneID" id="1451316"/>
<dbReference type="KEGG" id="mja:MJ_0455"/>
<dbReference type="eggNOG" id="arCOG05003">
    <property type="taxonomic scope" value="Archaea"/>
</dbReference>
<dbReference type="HOGENOM" id="CLU_091350_1_0_2"/>
<dbReference type="InParanoid" id="Q57897"/>
<dbReference type="OrthoDB" id="59661at2157"/>
<dbReference type="PhylomeDB" id="Q57897"/>
<dbReference type="Proteomes" id="UP000000805">
    <property type="component" value="Chromosome"/>
</dbReference>
<dbReference type="InterPro" id="IPR014997">
    <property type="entry name" value="DUF1847"/>
</dbReference>
<dbReference type="Pfam" id="PF08901">
    <property type="entry name" value="DUF1847"/>
    <property type="match status" value="1"/>
</dbReference>
<name>Y455_METJA</name>